<reference key="1">
    <citation type="journal article" date="2000" name="DNA Res.">
        <title>Complete genome structure of the nitrogen-fixing symbiotic bacterium Mesorhizobium loti.</title>
        <authorList>
            <person name="Kaneko T."/>
            <person name="Nakamura Y."/>
            <person name="Sato S."/>
            <person name="Asamizu E."/>
            <person name="Kato T."/>
            <person name="Sasamoto S."/>
            <person name="Watanabe A."/>
            <person name="Idesawa K."/>
            <person name="Ishikawa A."/>
            <person name="Kawashima K."/>
            <person name="Kimura T."/>
            <person name="Kishida Y."/>
            <person name="Kiyokawa C."/>
            <person name="Kohara M."/>
            <person name="Matsumoto M."/>
            <person name="Matsuno A."/>
            <person name="Mochizuki Y."/>
            <person name="Nakayama S."/>
            <person name="Nakazaki N."/>
            <person name="Shimpo S."/>
            <person name="Sugimoto M."/>
            <person name="Takeuchi C."/>
            <person name="Yamada M."/>
            <person name="Tabata S."/>
        </authorList>
    </citation>
    <scope>NUCLEOTIDE SEQUENCE [LARGE SCALE GENOMIC DNA]</scope>
    <source>
        <strain>LMG 29417 / CECT 9101 / MAFF 303099</strain>
    </source>
</reference>
<protein>
    <recommendedName>
        <fullName evidence="1">Co-chaperonin GroES 2</fullName>
    </recommendedName>
    <alternativeName>
        <fullName evidence="1">10 kDa chaperonin 2</fullName>
    </alternativeName>
    <alternativeName>
        <fullName evidence="1">Chaperonin-10 2</fullName>
        <shortName evidence="1">Cpn10 2</shortName>
    </alternativeName>
</protein>
<proteinExistence type="inferred from homology"/>
<comment type="function">
    <text evidence="1">Together with the chaperonin GroEL, plays an essential role in assisting protein folding. The GroEL-GroES system forms a nano-cage that allows encapsulation of the non-native substrate proteins and provides a physical environment optimized to promote and accelerate protein folding. GroES binds to the apical surface of the GroEL ring, thereby capping the opening of the GroEL channel.</text>
</comment>
<comment type="subunit">
    <text evidence="1">Heptamer of 7 subunits arranged in a ring. Interacts with the chaperonin GroEL.</text>
</comment>
<comment type="subcellular location">
    <subcellularLocation>
        <location evidence="1">Cytoplasm</location>
    </subcellularLocation>
</comment>
<comment type="similarity">
    <text evidence="1 2">Belongs to the GroES chaperonin family.</text>
</comment>
<organism>
    <name type="scientific">Mesorhizobium japonicum (strain LMG 29417 / CECT 9101 / MAFF 303099)</name>
    <name type="common">Mesorhizobium loti (strain MAFF 303099)</name>
    <dbReference type="NCBI Taxonomy" id="266835"/>
    <lineage>
        <taxon>Bacteria</taxon>
        <taxon>Pseudomonadati</taxon>
        <taxon>Pseudomonadota</taxon>
        <taxon>Alphaproteobacteria</taxon>
        <taxon>Hyphomicrobiales</taxon>
        <taxon>Phyllobacteriaceae</taxon>
        <taxon>Mesorhizobium</taxon>
    </lineage>
</organism>
<feature type="chain" id="PRO_0000174813" description="Co-chaperonin GroES 2">
    <location>
        <begin position="1"/>
        <end position="104"/>
    </location>
</feature>
<accession>Q98II0</accession>
<evidence type="ECO:0000255" key="1">
    <source>
        <dbReference type="HAMAP-Rule" id="MF_00580"/>
    </source>
</evidence>
<evidence type="ECO:0000305" key="2"/>
<keyword id="KW-0143">Chaperone</keyword>
<keyword id="KW-0963">Cytoplasm</keyword>
<gene>
    <name evidence="1" type="primary">groES2</name>
    <name evidence="1" type="synonym">groS2</name>
    <name type="ordered locus">mlr2393</name>
</gene>
<dbReference type="EMBL" id="BA000012">
    <property type="protein sequence ID" value="BAB49536.1"/>
    <property type="molecule type" value="Genomic_DNA"/>
</dbReference>
<dbReference type="SMR" id="Q98II0"/>
<dbReference type="KEGG" id="mlo:mlr2393"/>
<dbReference type="eggNOG" id="COG0234">
    <property type="taxonomic scope" value="Bacteria"/>
</dbReference>
<dbReference type="HOGENOM" id="CLU_132825_1_0_5"/>
<dbReference type="Proteomes" id="UP000000552">
    <property type="component" value="Chromosome"/>
</dbReference>
<dbReference type="GO" id="GO:0005737">
    <property type="term" value="C:cytoplasm"/>
    <property type="evidence" value="ECO:0007669"/>
    <property type="project" value="UniProtKB-SubCell"/>
</dbReference>
<dbReference type="GO" id="GO:0005524">
    <property type="term" value="F:ATP binding"/>
    <property type="evidence" value="ECO:0007669"/>
    <property type="project" value="InterPro"/>
</dbReference>
<dbReference type="GO" id="GO:0046872">
    <property type="term" value="F:metal ion binding"/>
    <property type="evidence" value="ECO:0007669"/>
    <property type="project" value="TreeGrafter"/>
</dbReference>
<dbReference type="GO" id="GO:0044183">
    <property type="term" value="F:protein folding chaperone"/>
    <property type="evidence" value="ECO:0007669"/>
    <property type="project" value="InterPro"/>
</dbReference>
<dbReference type="GO" id="GO:0051087">
    <property type="term" value="F:protein-folding chaperone binding"/>
    <property type="evidence" value="ECO:0007669"/>
    <property type="project" value="TreeGrafter"/>
</dbReference>
<dbReference type="GO" id="GO:0051082">
    <property type="term" value="F:unfolded protein binding"/>
    <property type="evidence" value="ECO:0007669"/>
    <property type="project" value="TreeGrafter"/>
</dbReference>
<dbReference type="GO" id="GO:0051085">
    <property type="term" value="P:chaperone cofactor-dependent protein refolding"/>
    <property type="evidence" value="ECO:0007669"/>
    <property type="project" value="TreeGrafter"/>
</dbReference>
<dbReference type="CDD" id="cd00320">
    <property type="entry name" value="cpn10"/>
    <property type="match status" value="1"/>
</dbReference>
<dbReference type="FunFam" id="2.30.33.40:FF:000001">
    <property type="entry name" value="10 kDa chaperonin"/>
    <property type="match status" value="1"/>
</dbReference>
<dbReference type="Gene3D" id="2.30.33.40">
    <property type="entry name" value="GroES chaperonin"/>
    <property type="match status" value="1"/>
</dbReference>
<dbReference type="HAMAP" id="MF_00580">
    <property type="entry name" value="CH10"/>
    <property type="match status" value="1"/>
</dbReference>
<dbReference type="InterPro" id="IPR020818">
    <property type="entry name" value="Chaperonin_GroES"/>
</dbReference>
<dbReference type="InterPro" id="IPR037124">
    <property type="entry name" value="Chaperonin_GroES_sf"/>
</dbReference>
<dbReference type="InterPro" id="IPR018369">
    <property type="entry name" value="Chaprnonin_Cpn10_CS"/>
</dbReference>
<dbReference type="InterPro" id="IPR011032">
    <property type="entry name" value="GroES-like_sf"/>
</dbReference>
<dbReference type="NCBIfam" id="NF001527">
    <property type="entry name" value="PRK00364.1-2"/>
    <property type="match status" value="1"/>
</dbReference>
<dbReference type="NCBIfam" id="NF001529">
    <property type="entry name" value="PRK00364.1-5"/>
    <property type="match status" value="1"/>
</dbReference>
<dbReference type="NCBIfam" id="NF001531">
    <property type="entry name" value="PRK00364.2-2"/>
    <property type="match status" value="1"/>
</dbReference>
<dbReference type="NCBIfam" id="NF001533">
    <property type="entry name" value="PRK00364.2-4"/>
    <property type="match status" value="1"/>
</dbReference>
<dbReference type="NCBIfam" id="NF001534">
    <property type="entry name" value="PRK00364.2-5"/>
    <property type="match status" value="1"/>
</dbReference>
<dbReference type="PANTHER" id="PTHR10772">
    <property type="entry name" value="10 KDA HEAT SHOCK PROTEIN"/>
    <property type="match status" value="1"/>
</dbReference>
<dbReference type="PANTHER" id="PTHR10772:SF58">
    <property type="entry name" value="CO-CHAPERONIN GROES"/>
    <property type="match status" value="1"/>
</dbReference>
<dbReference type="Pfam" id="PF00166">
    <property type="entry name" value="Cpn10"/>
    <property type="match status" value="1"/>
</dbReference>
<dbReference type="PRINTS" id="PR00297">
    <property type="entry name" value="CHAPERONIN10"/>
</dbReference>
<dbReference type="SMART" id="SM00883">
    <property type="entry name" value="Cpn10"/>
    <property type="match status" value="1"/>
</dbReference>
<dbReference type="SUPFAM" id="SSF50129">
    <property type="entry name" value="GroES-like"/>
    <property type="match status" value="1"/>
</dbReference>
<dbReference type="PROSITE" id="PS00681">
    <property type="entry name" value="CHAPERONINS_CPN10"/>
    <property type="match status" value="1"/>
</dbReference>
<name>CH102_RHILO</name>
<sequence length="104" mass="11311">MTFRPLHDRILVRRIEAEEKTAGGIIIPDTAKEKPQEGEVIAIGPGARDESGKLTPLDVKAGDRILFGKWSGTEIKLNGEDLLIMKESDVMGVIEQTATVKKAA</sequence>